<accession>Q1JJD9</accession>
<sequence length="150" mass="16512">MKVIFLADVKGKGKKGEIKEVPTGYAQNFLIKKNLAKEATSQSIGELKGKQKAEEKAQAEILAEAQAVKAVLDEDKTRVQFQEKVGPDGRTFGSITAKKISEELQKQFGVKVDKRHIVLDHPIRAIGLIEVPVKLHKEVTAEIKLAITEA</sequence>
<keyword id="KW-0687">Ribonucleoprotein</keyword>
<keyword id="KW-0689">Ribosomal protein</keyword>
<keyword id="KW-0694">RNA-binding</keyword>
<keyword id="KW-0699">rRNA-binding</keyword>
<gene>
    <name evidence="1" type="primary">rplI</name>
    <name type="ordered locus">MGAS9429_Spy1847</name>
</gene>
<protein>
    <recommendedName>
        <fullName evidence="1">Large ribosomal subunit protein bL9</fullName>
    </recommendedName>
    <alternativeName>
        <fullName evidence="2">50S ribosomal protein L9</fullName>
    </alternativeName>
</protein>
<feature type="chain" id="PRO_0000258493" description="Large ribosomal subunit protein bL9">
    <location>
        <begin position="1"/>
        <end position="150"/>
    </location>
</feature>
<dbReference type="EMBL" id="CP000259">
    <property type="protein sequence ID" value="ABF33034.1"/>
    <property type="molecule type" value="Genomic_DNA"/>
</dbReference>
<dbReference type="RefSeq" id="WP_002991410.1">
    <property type="nucleotide sequence ID" value="NC_008021.1"/>
</dbReference>
<dbReference type="SMR" id="Q1JJD9"/>
<dbReference type="GeneID" id="69901603"/>
<dbReference type="KEGG" id="spk:MGAS9429_Spy1847"/>
<dbReference type="HOGENOM" id="CLU_078938_3_2_9"/>
<dbReference type="Proteomes" id="UP000002433">
    <property type="component" value="Chromosome"/>
</dbReference>
<dbReference type="GO" id="GO:1990904">
    <property type="term" value="C:ribonucleoprotein complex"/>
    <property type="evidence" value="ECO:0007669"/>
    <property type="project" value="UniProtKB-KW"/>
</dbReference>
<dbReference type="GO" id="GO:0005840">
    <property type="term" value="C:ribosome"/>
    <property type="evidence" value="ECO:0007669"/>
    <property type="project" value="UniProtKB-KW"/>
</dbReference>
<dbReference type="GO" id="GO:0019843">
    <property type="term" value="F:rRNA binding"/>
    <property type="evidence" value="ECO:0007669"/>
    <property type="project" value="UniProtKB-UniRule"/>
</dbReference>
<dbReference type="GO" id="GO:0003735">
    <property type="term" value="F:structural constituent of ribosome"/>
    <property type="evidence" value="ECO:0007669"/>
    <property type="project" value="InterPro"/>
</dbReference>
<dbReference type="GO" id="GO:0006412">
    <property type="term" value="P:translation"/>
    <property type="evidence" value="ECO:0007669"/>
    <property type="project" value="UniProtKB-UniRule"/>
</dbReference>
<dbReference type="FunFam" id="3.40.5.10:FF:000002">
    <property type="entry name" value="50S ribosomal protein L9"/>
    <property type="match status" value="1"/>
</dbReference>
<dbReference type="Gene3D" id="3.10.430.100">
    <property type="entry name" value="Ribosomal protein L9, C-terminal domain"/>
    <property type="match status" value="1"/>
</dbReference>
<dbReference type="Gene3D" id="3.40.5.10">
    <property type="entry name" value="Ribosomal protein L9, N-terminal domain"/>
    <property type="match status" value="1"/>
</dbReference>
<dbReference type="HAMAP" id="MF_00503">
    <property type="entry name" value="Ribosomal_bL9"/>
    <property type="match status" value="1"/>
</dbReference>
<dbReference type="InterPro" id="IPR000244">
    <property type="entry name" value="Ribosomal_bL9"/>
</dbReference>
<dbReference type="InterPro" id="IPR009027">
    <property type="entry name" value="Ribosomal_bL9/RNase_H1_N"/>
</dbReference>
<dbReference type="InterPro" id="IPR020594">
    <property type="entry name" value="Ribosomal_bL9_bac/chp"/>
</dbReference>
<dbReference type="InterPro" id="IPR020069">
    <property type="entry name" value="Ribosomal_bL9_C"/>
</dbReference>
<dbReference type="InterPro" id="IPR036791">
    <property type="entry name" value="Ribosomal_bL9_C_sf"/>
</dbReference>
<dbReference type="InterPro" id="IPR020070">
    <property type="entry name" value="Ribosomal_bL9_N"/>
</dbReference>
<dbReference type="InterPro" id="IPR036935">
    <property type="entry name" value="Ribosomal_bL9_N_sf"/>
</dbReference>
<dbReference type="NCBIfam" id="TIGR00158">
    <property type="entry name" value="L9"/>
    <property type="match status" value="1"/>
</dbReference>
<dbReference type="PANTHER" id="PTHR21368">
    <property type="entry name" value="50S RIBOSOMAL PROTEIN L9"/>
    <property type="match status" value="1"/>
</dbReference>
<dbReference type="Pfam" id="PF03948">
    <property type="entry name" value="Ribosomal_L9_C"/>
    <property type="match status" value="1"/>
</dbReference>
<dbReference type="Pfam" id="PF01281">
    <property type="entry name" value="Ribosomal_L9_N"/>
    <property type="match status" value="1"/>
</dbReference>
<dbReference type="SUPFAM" id="SSF55658">
    <property type="entry name" value="L9 N-domain-like"/>
    <property type="match status" value="1"/>
</dbReference>
<dbReference type="SUPFAM" id="SSF55653">
    <property type="entry name" value="Ribosomal protein L9 C-domain"/>
    <property type="match status" value="1"/>
</dbReference>
<dbReference type="PROSITE" id="PS00651">
    <property type="entry name" value="RIBOSOMAL_L9"/>
    <property type="match status" value="1"/>
</dbReference>
<evidence type="ECO:0000255" key="1">
    <source>
        <dbReference type="HAMAP-Rule" id="MF_00503"/>
    </source>
</evidence>
<evidence type="ECO:0000305" key="2"/>
<organism>
    <name type="scientific">Streptococcus pyogenes serotype M12 (strain MGAS9429)</name>
    <dbReference type="NCBI Taxonomy" id="370551"/>
    <lineage>
        <taxon>Bacteria</taxon>
        <taxon>Bacillati</taxon>
        <taxon>Bacillota</taxon>
        <taxon>Bacilli</taxon>
        <taxon>Lactobacillales</taxon>
        <taxon>Streptococcaceae</taxon>
        <taxon>Streptococcus</taxon>
    </lineage>
</organism>
<proteinExistence type="inferred from homology"/>
<name>RL9_STRPC</name>
<reference key="1">
    <citation type="journal article" date="2006" name="Proc. Natl. Acad. Sci. U.S.A.">
        <title>Molecular genetic anatomy of inter- and intraserotype variation in the human bacterial pathogen group A Streptococcus.</title>
        <authorList>
            <person name="Beres S.B."/>
            <person name="Richter E.W."/>
            <person name="Nagiec M.J."/>
            <person name="Sumby P."/>
            <person name="Porcella S.F."/>
            <person name="DeLeo F.R."/>
            <person name="Musser J.M."/>
        </authorList>
    </citation>
    <scope>NUCLEOTIDE SEQUENCE [LARGE SCALE GENOMIC DNA]</scope>
    <source>
        <strain>MGAS9429</strain>
    </source>
</reference>
<comment type="function">
    <text evidence="1">Binds to the 23S rRNA.</text>
</comment>
<comment type="similarity">
    <text evidence="1">Belongs to the bacterial ribosomal protein bL9 family.</text>
</comment>